<organism>
    <name type="scientific">Helicobacter pylori (strain HPAG1)</name>
    <dbReference type="NCBI Taxonomy" id="357544"/>
    <lineage>
        <taxon>Bacteria</taxon>
        <taxon>Pseudomonadati</taxon>
        <taxon>Campylobacterota</taxon>
        <taxon>Epsilonproteobacteria</taxon>
        <taxon>Campylobacterales</taxon>
        <taxon>Helicobacteraceae</taxon>
        <taxon>Helicobacter</taxon>
    </lineage>
</organism>
<protein>
    <recommendedName>
        <fullName evidence="1">Na(+)/H(+) antiporter NhaA</fullName>
    </recommendedName>
    <alternativeName>
        <fullName evidence="1">Sodium/proton antiporter NhaA</fullName>
    </alternativeName>
</protein>
<proteinExistence type="inferred from homology"/>
<dbReference type="EMBL" id="CP000241">
    <property type="protein sequence ID" value="ABF85568.1"/>
    <property type="molecule type" value="Genomic_DNA"/>
</dbReference>
<dbReference type="RefSeq" id="WP_001101280.1">
    <property type="nucleotide sequence ID" value="NC_008086.1"/>
</dbReference>
<dbReference type="SMR" id="Q1CR54"/>
<dbReference type="KEGG" id="hpa:HPAG1_1501"/>
<dbReference type="HOGENOM" id="CLU_015803_1_2_7"/>
<dbReference type="GO" id="GO:0005886">
    <property type="term" value="C:plasma membrane"/>
    <property type="evidence" value="ECO:0007669"/>
    <property type="project" value="UniProtKB-SubCell"/>
</dbReference>
<dbReference type="GO" id="GO:0015385">
    <property type="term" value="F:sodium:proton antiporter activity"/>
    <property type="evidence" value="ECO:0007669"/>
    <property type="project" value="TreeGrafter"/>
</dbReference>
<dbReference type="GO" id="GO:0006885">
    <property type="term" value="P:regulation of pH"/>
    <property type="evidence" value="ECO:0007669"/>
    <property type="project" value="InterPro"/>
</dbReference>
<dbReference type="Gene3D" id="1.20.1530.10">
    <property type="entry name" value="Na+/H+ antiporter like domain"/>
    <property type="match status" value="1"/>
</dbReference>
<dbReference type="HAMAP" id="MF_01844">
    <property type="entry name" value="NhaA"/>
    <property type="match status" value="1"/>
</dbReference>
<dbReference type="InterPro" id="IPR023171">
    <property type="entry name" value="Na/H_antiporter_dom_sf"/>
</dbReference>
<dbReference type="InterPro" id="IPR004670">
    <property type="entry name" value="NhaA"/>
</dbReference>
<dbReference type="NCBIfam" id="TIGR00773">
    <property type="entry name" value="NhaA"/>
    <property type="match status" value="1"/>
</dbReference>
<dbReference type="NCBIfam" id="NF011428">
    <property type="entry name" value="PRK14856.1"/>
    <property type="match status" value="1"/>
</dbReference>
<dbReference type="PANTHER" id="PTHR30341:SF0">
    <property type="entry name" value="NA(+)_H(+) ANTIPORTER NHAA"/>
    <property type="match status" value="1"/>
</dbReference>
<dbReference type="PANTHER" id="PTHR30341">
    <property type="entry name" value="SODIUM ION/PROTON ANTIPORTER NHAA-RELATED"/>
    <property type="match status" value="1"/>
</dbReference>
<dbReference type="Pfam" id="PF06965">
    <property type="entry name" value="Na_H_antiport_1"/>
    <property type="match status" value="1"/>
</dbReference>
<feature type="chain" id="PRO_0000334321" description="Na(+)/H(+) antiporter NhaA">
    <location>
        <begin position="1"/>
        <end position="438"/>
    </location>
</feature>
<feature type="transmembrane region" description="Helical" evidence="1">
    <location>
        <begin position="23"/>
        <end position="43"/>
    </location>
</feature>
<feature type="transmembrane region" description="Helical" evidence="1">
    <location>
        <begin position="62"/>
        <end position="82"/>
    </location>
</feature>
<feature type="transmembrane region" description="Helical" evidence="1">
    <location>
        <begin position="104"/>
        <end position="124"/>
    </location>
</feature>
<feature type="transmembrane region" description="Helical" evidence="1">
    <location>
        <begin position="133"/>
        <end position="153"/>
    </location>
</feature>
<feature type="transmembrane region" description="Helical" evidence="1">
    <location>
        <begin position="162"/>
        <end position="182"/>
    </location>
</feature>
<feature type="transmembrane region" description="Helical" evidence="1">
    <location>
        <begin position="185"/>
        <end position="205"/>
    </location>
</feature>
<feature type="transmembrane region" description="Helical" evidence="1">
    <location>
        <begin position="221"/>
        <end position="241"/>
    </location>
</feature>
<feature type="transmembrane region" description="Helical" evidence="1">
    <location>
        <begin position="302"/>
        <end position="322"/>
    </location>
</feature>
<feature type="transmembrane region" description="Helical" evidence="1">
    <location>
        <begin position="337"/>
        <end position="357"/>
    </location>
</feature>
<feature type="transmembrane region" description="Helical" evidence="1">
    <location>
        <begin position="372"/>
        <end position="392"/>
    </location>
</feature>
<feature type="transmembrane region" description="Helical" evidence="1">
    <location>
        <begin position="410"/>
        <end position="430"/>
    </location>
</feature>
<reference key="1">
    <citation type="journal article" date="2006" name="Proc. Natl. Acad. Sci. U.S.A.">
        <title>The complete genome sequence of a chronic atrophic gastritis Helicobacter pylori strain: evolution during disease progression.</title>
        <authorList>
            <person name="Oh J.D."/>
            <person name="Kling-Baeckhed H."/>
            <person name="Giannakis M."/>
            <person name="Xu J."/>
            <person name="Fulton R.S."/>
            <person name="Fulton L.A."/>
            <person name="Cordum H.S."/>
            <person name="Wang C."/>
            <person name="Elliott G."/>
            <person name="Edwards J."/>
            <person name="Mardis E.R."/>
            <person name="Engstrand L.G."/>
            <person name="Gordon J.I."/>
        </authorList>
    </citation>
    <scope>NUCLEOTIDE SEQUENCE [LARGE SCALE GENOMIC DNA]</scope>
    <source>
        <strain>HPAG1</strain>
    </source>
</reference>
<evidence type="ECO:0000255" key="1">
    <source>
        <dbReference type="HAMAP-Rule" id="MF_01844"/>
    </source>
</evidence>
<gene>
    <name evidence="1" type="primary">nhaA</name>
    <name type="ordered locus">HPAG1_1501</name>
</gene>
<accession>Q1CR54</accession>
<name>NHAA_HELPH</name>
<keyword id="KW-0050">Antiport</keyword>
<keyword id="KW-0997">Cell inner membrane</keyword>
<keyword id="KW-1003">Cell membrane</keyword>
<keyword id="KW-0406">Ion transport</keyword>
<keyword id="KW-0472">Membrane</keyword>
<keyword id="KW-0915">Sodium</keyword>
<keyword id="KW-0739">Sodium transport</keyword>
<keyword id="KW-0812">Transmembrane</keyword>
<keyword id="KW-1133">Transmembrane helix</keyword>
<keyword id="KW-0813">Transport</keyword>
<sequence>MNVKKTENALSLTLKNFIKSESFGGIFLFLNAVLAMVVANSFLKESYFALWHTPFGFQIGDFFIGFSLHNWIDDVLMALFFLMIGLEIKRELLFGELSSFKKASFPVIAAIGGMIAPGLIYFFLNADTPSQHGFGIPMATDIAFALGVIMLLGKRVPTALKVFLITLAVADDLGAIVVIALFYTTNLKFAWLLGALGVVLILAVLNRLNVRSLVPYLLLGVLLWFCVHQSGIHATIAAVILAFMIPVKIPKDSKNVELLELGKRYAETSSGALLTKEQQEILHSIEEKASALQSPLERLEHFLAPISGYFIMPLFAFANAGVSVDSSINLEVDKVLLGVILGLCLGKPLGIFLITFISEKLKITARPKGISWWHILGAGLLAGIGFTMSMFISNLAFTSEHKDAMEVAKIAILLGSLISGIIGALYLFALDKRAALKK</sequence>
<comment type="function">
    <text evidence="1">Na(+)/H(+) antiporter that extrudes sodium in exchange for external protons.</text>
</comment>
<comment type="catalytic activity">
    <reaction evidence="1">
        <text>Na(+)(in) + 2 H(+)(out) = Na(+)(out) + 2 H(+)(in)</text>
        <dbReference type="Rhea" id="RHEA:29251"/>
        <dbReference type="ChEBI" id="CHEBI:15378"/>
        <dbReference type="ChEBI" id="CHEBI:29101"/>
    </reaction>
    <physiologicalReaction direction="left-to-right" evidence="1">
        <dbReference type="Rhea" id="RHEA:29252"/>
    </physiologicalReaction>
</comment>
<comment type="subcellular location">
    <subcellularLocation>
        <location evidence="1">Cell inner membrane</location>
        <topology evidence="1">Multi-pass membrane protein</topology>
    </subcellularLocation>
</comment>
<comment type="similarity">
    <text evidence="1">Belongs to the NhaA Na(+)/H(+) (TC 2.A.33) antiporter family.</text>
</comment>